<sequence>MTETPMMDDLERVLYNQDDIQKRIRELAAELTEFYEDKNPVMICVLTGAVFFYTDLLKHLDFQLEPDYIICSSYSGTKSTGNLTISKDLKTNIEGRHVLVVEDIIDTGLTMYQLLNNLQMRKPASLKVCTLCDKDIGKKAYDVPIDYCGFVVENRYIIGYGFDFHNKYRNLPVIGILKESVYT</sequence>
<accession>P51900</accession>
<keyword id="KW-0002">3D-structure</keyword>
<keyword id="KW-0963">Cytoplasm</keyword>
<keyword id="KW-0328">Glycosyltransferase</keyword>
<keyword id="KW-0460">Magnesium</keyword>
<keyword id="KW-0479">Metal-binding</keyword>
<keyword id="KW-0547">Nucleotide-binding</keyword>
<keyword id="KW-0660">Purine salvage</keyword>
<keyword id="KW-0808">Transferase</keyword>
<protein>
    <recommendedName>
        <fullName>Hypoxanthine-guanine-xanthine phosphoribosyltransferase</fullName>
        <shortName>HGPRT</shortName>
        <shortName>HGXPRT</shortName>
        <shortName>HGXPRTase</shortName>
        <ecNumber evidence="2">2.4.2.22</ecNumber>
        <ecNumber evidence="2">2.4.2.8</ecNumber>
    </recommendedName>
</protein>
<reference key="1">
    <citation type="journal article" date="1994" name="Mol. Biochem. Parasitol.">
        <title>Isolation, sequencing and expression of the gene encoding hypoxanthine-guanine-xanthine phosphoribosyltransferase of Tritrichomonas foetus.</title>
        <authorList>
            <person name="Chin M.S."/>
            <person name="Wang C.C."/>
        </authorList>
    </citation>
    <scope>NUCLEOTIDE SEQUENCE</scope>
    <source>
        <strain>KV1</strain>
    </source>
</reference>
<reference key="2">
    <citation type="journal article" date="1996" name="Biochemistry">
        <title>Crystal structure of the hypoxanthine-guanine-xanthine phosphoribosyltransferase from the protozoan parasite Tritrichomonas foetus.</title>
        <authorList>
            <person name="Somoza J.R."/>
            <person name="Chin M.S."/>
            <person name="Focia P.J."/>
            <person name="Wang C.C."/>
            <person name="Fletterick R.J."/>
        </authorList>
    </citation>
    <scope>X-RAY CRYSTALLOGRAPHY (1.9 ANGSTROMS)</scope>
    <scope>MASS SPECTROMETRY</scope>
</reference>
<reference key="3">
    <citation type="journal article" date="1996" name="Eur. J. Biochem.">
        <title>Probing the active site of Tritrichomonas foetus hypoxanthine-guanine-xanthine phosphoribosyltransferase using covalent modification of cysteine residues.</title>
        <authorList>
            <person name="Kanaani J."/>
            <person name="Somoza J.R."/>
            <person name="Maltby D."/>
            <person name="Wang C.C."/>
        </authorList>
    </citation>
    <scope>COVALENT MODIFICATION OF CYSTEINES</scope>
</reference>
<gene>
    <name type="primary">HPT</name>
</gene>
<evidence type="ECO:0000250" key="1"/>
<evidence type="ECO:0000250" key="2">
    <source>
        <dbReference type="UniProtKB" id="Q26997"/>
    </source>
</evidence>
<evidence type="ECO:0000269" key="3">
    <source>
    </source>
</evidence>
<evidence type="ECO:0000305" key="4"/>
<evidence type="ECO:0007829" key="5">
    <source>
        <dbReference type="PDB" id="1HGX"/>
    </source>
</evidence>
<organism>
    <name type="scientific">Tritrichomonas foetus</name>
    <name type="common">Trichomonas foetus</name>
    <name type="synonym">Tritrichomonas suis</name>
    <dbReference type="NCBI Taxonomy" id="56690"/>
    <lineage>
        <taxon>Eukaryota</taxon>
        <taxon>Metamonada</taxon>
        <taxon>Parabasalia</taxon>
        <taxon>Tritrichomonadida</taxon>
        <taxon>Tritrichomonadidae</taxon>
        <taxon>Tritrichomonas</taxon>
    </lineage>
</organism>
<proteinExistence type="evidence at protein level"/>
<comment type="function">
    <text>Essential in nucleic acid metabolism of T.foetus because the parasite is unable to synthesize purine nucleotides de novo and relies on the HGXPRTase activities for its purine requirements by salvaging purine bases from the host. Works with guanine, hypoxanthine and xanthine.</text>
</comment>
<comment type="catalytic activity">
    <reaction evidence="2">
        <text>IMP + diphosphate = hypoxanthine + 5-phospho-alpha-D-ribose 1-diphosphate</text>
        <dbReference type="Rhea" id="RHEA:17973"/>
        <dbReference type="ChEBI" id="CHEBI:17368"/>
        <dbReference type="ChEBI" id="CHEBI:33019"/>
        <dbReference type="ChEBI" id="CHEBI:58017"/>
        <dbReference type="ChEBI" id="CHEBI:58053"/>
        <dbReference type="EC" id="2.4.2.8"/>
    </reaction>
    <physiologicalReaction direction="right-to-left" evidence="2">
        <dbReference type="Rhea" id="RHEA:17975"/>
    </physiologicalReaction>
</comment>
<comment type="catalytic activity">
    <reaction evidence="2">
        <text>GMP + diphosphate = guanine + 5-phospho-alpha-D-ribose 1-diphosphate</text>
        <dbReference type="Rhea" id="RHEA:25424"/>
        <dbReference type="ChEBI" id="CHEBI:16235"/>
        <dbReference type="ChEBI" id="CHEBI:33019"/>
        <dbReference type="ChEBI" id="CHEBI:58017"/>
        <dbReference type="ChEBI" id="CHEBI:58115"/>
        <dbReference type="EC" id="2.4.2.8"/>
    </reaction>
    <physiologicalReaction direction="right-to-left" evidence="2">
        <dbReference type="Rhea" id="RHEA:25426"/>
    </physiologicalReaction>
</comment>
<comment type="catalytic activity">
    <reaction evidence="2">
        <text>XMP + diphosphate = xanthine + 5-phospho-alpha-D-ribose 1-diphosphate</text>
        <dbReference type="Rhea" id="RHEA:10800"/>
        <dbReference type="ChEBI" id="CHEBI:17712"/>
        <dbReference type="ChEBI" id="CHEBI:33019"/>
        <dbReference type="ChEBI" id="CHEBI:57464"/>
        <dbReference type="ChEBI" id="CHEBI:58017"/>
        <dbReference type="EC" id="2.4.2.22"/>
    </reaction>
    <physiologicalReaction direction="right-to-left" evidence="2">
        <dbReference type="Rhea" id="RHEA:10802"/>
    </physiologicalReaction>
</comment>
<comment type="cofactor">
    <cofactor evidence="1">
        <name>Mg(2+)</name>
        <dbReference type="ChEBI" id="CHEBI:18420"/>
    </cofactor>
    <text evidence="1">Binds 2 magnesium ions per subunit. The magnesium ions are essentially bound to the substrate and have few direct interactions with the protein.</text>
</comment>
<comment type="pathway">
    <text>Purine metabolism; GMP biosynthesis via salvage pathway; GMP from guanine: step 1/1.</text>
</comment>
<comment type="pathway">
    <text>Purine metabolism; IMP biosynthesis via salvage pathway; IMP from hypoxanthine: step 1/1.</text>
</comment>
<comment type="pathway">
    <text>Purine metabolism; XMP biosynthesis via salvage pathway; XMP from xanthine: step 1/1.</text>
</comment>
<comment type="subunit">
    <text>Homodimer.</text>
</comment>
<comment type="subcellular location">
    <subcellularLocation>
        <location>Cytoplasm</location>
    </subcellularLocation>
</comment>
<comment type="mass spectrometry"/>
<comment type="similarity">
    <text evidence="4">Belongs to the purine/pyrimidine phosphoribosyltransferase family.</text>
</comment>
<dbReference type="EC" id="2.4.2.22" evidence="2"/>
<dbReference type="EC" id="2.4.2.8" evidence="2"/>
<dbReference type="EMBL" id="L08622">
    <property type="protein sequence ID" value="AAC37202.1"/>
    <property type="molecule type" value="Unassigned_DNA"/>
</dbReference>
<dbReference type="PDB" id="1HGX">
    <property type="method" value="X-ray"/>
    <property type="resolution" value="1.90 A"/>
    <property type="chains" value="A/B=1-183"/>
</dbReference>
<dbReference type="PDBsum" id="1HGX"/>
<dbReference type="SMR" id="P51900"/>
<dbReference type="VEuPathDB" id="TrichDB:TRFO_03136"/>
<dbReference type="SABIO-RK" id="P51900"/>
<dbReference type="UniPathway" id="UPA00591">
    <property type="reaction ID" value="UER00648"/>
</dbReference>
<dbReference type="UniPathway" id="UPA00602">
    <property type="reaction ID" value="UER00658"/>
</dbReference>
<dbReference type="UniPathway" id="UPA00909">
    <property type="reaction ID" value="UER00887"/>
</dbReference>
<dbReference type="EvolutionaryTrace" id="P51900"/>
<dbReference type="GO" id="GO:0005829">
    <property type="term" value="C:cytosol"/>
    <property type="evidence" value="ECO:0007669"/>
    <property type="project" value="TreeGrafter"/>
</dbReference>
<dbReference type="GO" id="GO:0052657">
    <property type="term" value="F:guanine phosphoribosyltransferase activity"/>
    <property type="evidence" value="ECO:0007669"/>
    <property type="project" value="RHEA"/>
</dbReference>
<dbReference type="GO" id="GO:0004422">
    <property type="term" value="F:hypoxanthine phosphoribosyltransferase activity"/>
    <property type="evidence" value="ECO:0007669"/>
    <property type="project" value="InterPro"/>
</dbReference>
<dbReference type="GO" id="GO:0000287">
    <property type="term" value="F:magnesium ion binding"/>
    <property type="evidence" value="ECO:0007669"/>
    <property type="project" value="TreeGrafter"/>
</dbReference>
<dbReference type="GO" id="GO:0000166">
    <property type="term" value="F:nucleotide binding"/>
    <property type="evidence" value="ECO:0007669"/>
    <property type="project" value="UniProtKB-KW"/>
</dbReference>
<dbReference type="GO" id="GO:0000310">
    <property type="term" value="F:xanthine phosphoribosyltransferase activity"/>
    <property type="evidence" value="ECO:0007669"/>
    <property type="project" value="UniProtKB-EC"/>
</dbReference>
<dbReference type="GO" id="GO:0032263">
    <property type="term" value="P:GMP salvage"/>
    <property type="evidence" value="ECO:0007669"/>
    <property type="project" value="UniProtKB-UniPathway"/>
</dbReference>
<dbReference type="GO" id="GO:0006178">
    <property type="term" value="P:guanine salvage"/>
    <property type="evidence" value="ECO:0007669"/>
    <property type="project" value="TreeGrafter"/>
</dbReference>
<dbReference type="GO" id="GO:0046100">
    <property type="term" value="P:hypoxanthine metabolic process"/>
    <property type="evidence" value="ECO:0007669"/>
    <property type="project" value="TreeGrafter"/>
</dbReference>
<dbReference type="GO" id="GO:0032264">
    <property type="term" value="P:IMP salvage"/>
    <property type="evidence" value="ECO:0007669"/>
    <property type="project" value="UniProtKB-UniPathway"/>
</dbReference>
<dbReference type="GO" id="GO:0006166">
    <property type="term" value="P:purine ribonucleoside salvage"/>
    <property type="evidence" value="ECO:0007669"/>
    <property type="project" value="UniProtKB-KW"/>
</dbReference>
<dbReference type="GO" id="GO:0032265">
    <property type="term" value="P:XMP salvage"/>
    <property type="evidence" value="ECO:0007669"/>
    <property type="project" value="UniProtKB-UniPathway"/>
</dbReference>
<dbReference type="CDD" id="cd06223">
    <property type="entry name" value="PRTases_typeI"/>
    <property type="match status" value="1"/>
</dbReference>
<dbReference type="FunFam" id="3.40.50.2020:FF:000006">
    <property type="entry name" value="Hypoxanthine phosphoribosyltransferase"/>
    <property type="match status" value="1"/>
</dbReference>
<dbReference type="Gene3D" id="3.40.50.2020">
    <property type="match status" value="1"/>
</dbReference>
<dbReference type="InterPro" id="IPR050408">
    <property type="entry name" value="HGPRT"/>
</dbReference>
<dbReference type="InterPro" id="IPR005904">
    <property type="entry name" value="Hxn_phspho_trans"/>
</dbReference>
<dbReference type="InterPro" id="IPR000836">
    <property type="entry name" value="PRibTrfase_dom"/>
</dbReference>
<dbReference type="InterPro" id="IPR029057">
    <property type="entry name" value="PRTase-like"/>
</dbReference>
<dbReference type="NCBIfam" id="TIGR01203">
    <property type="entry name" value="HGPRTase"/>
    <property type="match status" value="1"/>
</dbReference>
<dbReference type="PANTHER" id="PTHR43340:SF1">
    <property type="entry name" value="HYPOXANTHINE PHOSPHORIBOSYLTRANSFERASE"/>
    <property type="match status" value="1"/>
</dbReference>
<dbReference type="PANTHER" id="PTHR43340">
    <property type="entry name" value="HYPOXANTHINE-GUANINE PHOSPHORIBOSYLTRANSFERASE"/>
    <property type="match status" value="1"/>
</dbReference>
<dbReference type="Pfam" id="PF00156">
    <property type="entry name" value="Pribosyltran"/>
    <property type="match status" value="1"/>
</dbReference>
<dbReference type="SUPFAM" id="SSF53271">
    <property type="entry name" value="PRTase-like"/>
    <property type="match status" value="1"/>
</dbReference>
<dbReference type="PROSITE" id="PS00103">
    <property type="entry name" value="PUR_PYR_PR_TRANSFER"/>
    <property type="match status" value="1"/>
</dbReference>
<name>HGXR_TRIFO</name>
<feature type="chain" id="PRO_0000139600" description="Hypoxanthine-guanine-xanthine phosphoribosyltransferase">
    <location>
        <begin position="1"/>
        <end position="183"/>
    </location>
</feature>
<feature type="active site" description="Proton acceptor" evidence="1">
    <location>
        <position position="106"/>
    </location>
</feature>
<feature type="binding site">
    <location>
        <begin position="102"/>
        <end position="110"/>
    </location>
    <ligand>
        <name>GMP</name>
        <dbReference type="ChEBI" id="CHEBI:58115"/>
    </ligand>
</feature>
<feature type="binding site">
    <location>
        <position position="134"/>
    </location>
    <ligand>
        <name>GMP</name>
        <dbReference type="ChEBI" id="CHEBI:58115"/>
    </ligand>
</feature>
<feature type="binding site">
    <location>
        <position position="163"/>
    </location>
    <ligand>
        <name>GMP</name>
        <dbReference type="ChEBI" id="CHEBI:58115"/>
    </ligand>
</feature>
<feature type="binding site" evidence="1">
    <location>
        <position position="163"/>
    </location>
    <ligand>
        <name>Mg(2+)</name>
        <dbReference type="ChEBI" id="CHEBI:18420"/>
    </ligand>
</feature>
<feature type="strand" evidence="5">
    <location>
        <begin position="10"/>
        <end position="15"/>
    </location>
</feature>
<feature type="helix" evidence="5">
    <location>
        <begin position="17"/>
        <end position="35"/>
    </location>
</feature>
<feature type="turn" evidence="5">
    <location>
        <begin position="36"/>
        <end position="38"/>
    </location>
</feature>
<feature type="strand" evidence="5">
    <location>
        <begin position="41"/>
        <end position="45"/>
    </location>
</feature>
<feature type="turn" evidence="5">
    <location>
        <begin position="46"/>
        <end position="49"/>
    </location>
</feature>
<feature type="helix" evidence="5">
    <location>
        <begin position="50"/>
        <end position="57"/>
    </location>
</feature>
<feature type="strand" evidence="5">
    <location>
        <begin position="65"/>
        <end position="72"/>
    </location>
</feature>
<feature type="strand" evidence="5">
    <location>
        <begin position="84"/>
        <end position="87"/>
    </location>
</feature>
<feature type="strand" evidence="5">
    <location>
        <begin position="96"/>
        <end position="108"/>
    </location>
</feature>
<feature type="helix" evidence="5">
    <location>
        <begin position="109"/>
        <end position="119"/>
    </location>
</feature>
<feature type="strand" evidence="5">
    <location>
        <begin position="124"/>
        <end position="134"/>
    </location>
</feature>
<feature type="strand" evidence="5">
    <location>
        <begin position="146"/>
        <end position="152"/>
    </location>
</feature>
<feature type="strand" evidence="5">
    <location>
        <begin position="157"/>
        <end position="159"/>
    </location>
</feature>
<feature type="strand" evidence="5">
    <location>
        <begin position="172"/>
        <end position="177"/>
    </location>
</feature>